<reference key="1">
    <citation type="journal article" date="2006" name="Nature">
        <title>The DNA sequence, annotation and analysis of human chromosome 3.</title>
        <authorList>
            <person name="Muzny D.M."/>
            <person name="Scherer S.E."/>
            <person name="Kaul R."/>
            <person name="Wang J."/>
            <person name="Yu J."/>
            <person name="Sudbrak R."/>
            <person name="Buhay C.J."/>
            <person name="Chen R."/>
            <person name="Cree A."/>
            <person name="Ding Y."/>
            <person name="Dugan-Rocha S."/>
            <person name="Gill R."/>
            <person name="Gunaratne P."/>
            <person name="Harris R.A."/>
            <person name="Hawes A.C."/>
            <person name="Hernandez J."/>
            <person name="Hodgson A.V."/>
            <person name="Hume J."/>
            <person name="Jackson A."/>
            <person name="Khan Z.M."/>
            <person name="Kovar-Smith C."/>
            <person name="Lewis L.R."/>
            <person name="Lozado R.J."/>
            <person name="Metzker M.L."/>
            <person name="Milosavljevic A."/>
            <person name="Miner G.R."/>
            <person name="Morgan M.B."/>
            <person name="Nazareth L.V."/>
            <person name="Scott G."/>
            <person name="Sodergren E."/>
            <person name="Song X.-Z."/>
            <person name="Steffen D."/>
            <person name="Wei S."/>
            <person name="Wheeler D.A."/>
            <person name="Wright M.W."/>
            <person name="Worley K.C."/>
            <person name="Yuan Y."/>
            <person name="Zhang Z."/>
            <person name="Adams C.Q."/>
            <person name="Ansari-Lari M.A."/>
            <person name="Ayele M."/>
            <person name="Brown M.J."/>
            <person name="Chen G."/>
            <person name="Chen Z."/>
            <person name="Clendenning J."/>
            <person name="Clerc-Blankenburg K.P."/>
            <person name="Chen R."/>
            <person name="Chen Z."/>
            <person name="Davis C."/>
            <person name="Delgado O."/>
            <person name="Dinh H.H."/>
            <person name="Dong W."/>
            <person name="Draper H."/>
            <person name="Ernst S."/>
            <person name="Fu G."/>
            <person name="Gonzalez-Garay M.L."/>
            <person name="Garcia D.K."/>
            <person name="Gillett W."/>
            <person name="Gu J."/>
            <person name="Hao B."/>
            <person name="Haugen E."/>
            <person name="Havlak P."/>
            <person name="He X."/>
            <person name="Hennig S."/>
            <person name="Hu S."/>
            <person name="Huang W."/>
            <person name="Jackson L.R."/>
            <person name="Jacob L.S."/>
            <person name="Kelly S.H."/>
            <person name="Kube M."/>
            <person name="Levy R."/>
            <person name="Li Z."/>
            <person name="Liu B."/>
            <person name="Liu J."/>
            <person name="Liu W."/>
            <person name="Lu J."/>
            <person name="Maheshwari M."/>
            <person name="Nguyen B.-V."/>
            <person name="Okwuonu G.O."/>
            <person name="Palmeiri A."/>
            <person name="Pasternak S."/>
            <person name="Perez L.M."/>
            <person name="Phelps K.A."/>
            <person name="Plopper F.J."/>
            <person name="Qiang B."/>
            <person name="Raymond C."/>
            <person name="Rodriguez R."/>
            <person name="Saenphimmachak C."/>
            <person name="Santibanez J."/>
            <person name="Shen H."/>
            <person name="Shen Y."/>
            <person name="Subramanian S."/>
            <person name="Tabor P.E."/>
            <person name="Verduzco D."/>
            <person name="Waldron L."/>
            <person name="Wang J."/>
            <person name="Wang J."/>
            <person name="Wang Q."/>
            <person name="Williams G.A."/>
            <person name="Wong G.K.-S."/>
            <person name="Yao Z."/>
            <person name="Zhang J."/>
            <person name="Zhang X."/>
            <person name="Zhao G."/>
            <person name="Zhou J."/>
            <person name="Zhou Y."/>
            <person name="Nelson D."/>
            <person name="Lehrach H."/>
            <person name="Reinhardt R."/>
            <person name="Naylor S.L."/>
            <person name="Yang H."/>
            <person name="Olson M."/>
            <person name="Weinstock G."/>
            <person name="Gibbs R.A."/>
        </authorList>
    </citation>
    <scope>NUCLEOTIDE SEQUENCE [LARGE SCALE GENOMIC DNA]</scope>
</reference>
<organism>
    <name type="scientific">Homo sapiens</name>
    <name type="common">Human</name>
    <dbReference type="NCBI Taxonomy" id="9606"/>
    <lineage>
        <taxon>Eukaryota</taxon>
        <taxon>Metazoa</taxon>
        <taxon>Chordata</taxon>
        <taxon>Craniata</taxon>
        <taxon>Vertebrata</taxon>
        <taxon>Euteleostomi</taxon>
        <taxon>Mammalia</taxon>
        <taxon>Eutheria</taxon>
        <taxon>Euarchontoglires</taxon>
        <taxon>Primates</taxon>
        <taxon>Haplorrhini</taxon>
        <taxon>Catarrhini</taxon>
        <taxon>Hominidae</taxon>
        <taxon>Homo</taxon>
    </lineage>
</organism>
<evidence type="ECO:0000250" key="1">
    <source>
        <dbReference type="UniProtKB" id="Q4ZJM7"/>
    </source>
</evidence>
<evidence type="ECO:0000255" key="2"/>
<evidence type="ECO:0000255" key="3">
    <source>
        <dbReference type="PROSITE-ProRule" id="PRU00368"/>
    </source>
</evidence>
<evidence type="ECO:0000256" key="4">
    <source>
        <dbReference type="SAM" id="MobiDB-lite"/>
    </source>
</evidence>
<evidence type="ECO:0000305" key="5"/>
<evidence type="ECO:0000312" key="6">
    <source>
        <dbReference type="HGNC" id="HGNC:34071"/>
    </source>
</evidence>
<sequence length="477" mass="49422">MWMFSWLCAILIILAIAGMNTIAKTTPHTKFTKKSEEREMPKGLKPSSGPPPEEEETLFTEMAEMAEPITKPSALDSVFGTATLSPFENFTLDPADFFLNCCDCCSPVPGQKGEPGETGQPGPKGEAGNLGIPGPPGVVGPQGPRGYKGEKGLKGERGDQGVPGYPGKPGAQGEPGPKGDKGNIGLGGVKGQKGSKGDTCGNCTKGEKGDQGAMGSPGLHGGPGAKGEKGEMGEKGEMGDKGCCGDSGERGGKGQKGEGGMKGEKGSKGDSGMEGKSGRNGLPGAKGDPGIKGEKGELGPPGLLGPTGPKGDIGNKGVRGPTGKKGSRGFKGSKGELARVPRSAFSAGLSKPFPPPNIPIKFEKILYNDQGNYSPVTGKFNCSIPGTYVFSYHITVRGRPARISLVAQNKKQFKSRETLYGQEIDQASLLVILKLSAGDQVWLEVSKDWNGVYVSAEDDSIFTGFLLYPEETSGISP</sequence>
<gene>
    <name evidence="6" type="primary">OTOL1</name>
</gene>
<comment type="function">
    <text evidence="1">Collagen-like protein specifically expressed in the inner ear, which provides an organic scaffold for otoconia, a calcium carbonate structure in the saccule and utricle of the ear. Acts as a scaffold for biomineralization: sequesters calcium and forms interconnecting fibrils between otoconia that are incorporated into the calcium crystal structure. Together with OC90, modulates calcite crystal morphology and growth kinetics.</text>
</comment>
<comment type="subunit">
    <text evidence="1">Homooligomer; disulfide-linked; probably forms homotrimers. Interacts with OC90. Interacts with CBLN1.</text>
</comment>
<comment type="subcellular location">
    <subcellularLocation>
        <location evidence="1">Secreted</location>
        <location evidence="1">Extracellular space</location>
        <location evidence="1">Extracellular matrix</location>
    </subcellularLocation>
    <text evidence="1">Localized in both the surrounding otoconial matrix and otoconia.</text>
</comment>
<comment type="domain">
    <text evidence="1">The C1q domain mediates calcium-binding.</text>
</comment>
<comment type="similarity">
    <text evidence="5">Belongs to the OTOL1 family.</text>
</comment>
<feature type="signal peptide" evidence="2">
    <location>
        <begin position="1"/>
        <end position="23"/>
    </location>
</feature>
<feature type="chain" id="PRO_0000332215" description="Otolin-1">
    <location>
        <begin position="24"/>
        <end position="477"/>
    </location>
</feature>
<feature type="domain" description="Collagen-like 1">
    <location>
        <begin position="116"/>
        <end position="175"/>
    </location>
</feature>
<feature type="domain" description="Collagen-like 2">
    <location>
        <begin position="209"/>
        <end position="268"/>
    </location>
</feature>
<feature type="domain" description="Collagen-like 3">
    <location>
        <begin position="278"/>
        <end position="337"/>
    </location>
</feature>
<feature type="domain" description="C1q" evidence="3">
    <location>
        <begin position="338"/>
        <end position="473"/>
    </location>
</feature>
<feature type="region of interest" description="Disordered" evidence="4">
    <location>
        <begin position="28"/>
        <end position="55"/>
    </location>
</feature>
<feature type="region of interest" description="Disordered" evidence="4">
    <location>
        <begin position="111"/>
        <end position="337"/>
    </location>
</feature>
<feature type="compositionally biased region" description="Basic and acidic residues" evidence="4">
    <location>
        <begin position="33"/>
        <end position="42"/>
    </location>
</feature>
<feature type="compositionally biased region" description="Basic and acidic residues" evidence="4">
    <location>
        <begin position="147"/>
        <end position="159"/>
    </location>
</feature>
<feature type="compositionally biased region" description="Gly residues" evidence="4">
    <location>
        <begin position="182"/>
        <end position="191"/>
    </location>
</feature>
<feature type="compositionally biased region" description="Basic and acidic residues" evidence="4">
    <location>
        <begin position="226"/>
        <end position="240"/>
    </location>
</feature>
<feature type="compositionally biased region" description="Basic and acidic residues" evidence="4">
    <location>
        <begin position="247"/>
        <end position="277"/>
    </location>
</feature>
<feature type="compositionally biased region" description="Low complexity" evidence="4">
    <location>
        <begin position="298"/>
        <end position="310"/>
    </location>
</feature>
<feature type="modified residue" description="Hydroxyproline" evidence="1">
    <location>
        <position position="133"/>
    </location>
</feature>
<feature type="modified residue" description="Hydroxyproline" evidence="1">
    <location>
        <position position="136"/>
    </location>
</feature>
<feature type="modified residue" description="Hydroxyproline" evidence="1">
    <location>
        <position position="163"/>
    </location>
</feature>
<feature type="modified residue" description="Hydroxyproline" evidence="1">
    <location>
        <position position="166"/>
    </location>
</feature>
<feature type="modified residue" description="Hydroxyproline" evidence="1">
    <location>
        <position position="169"/>
    </location>
</feature>
<feature type="modified residue" description="5-hydroxylysine" evidence="1">
    <location>
        <position position="178"/>
    </location>
</feature>
<feature type="modified residue" description="Hydroxyproline" evidence="1">
    <location>
        <position position="223"/>
    </location>
</feature>
<feature type="modified residue" description="Hydroxyproline" evidence="1">
    <location>
        <position position="283"/>
    </location>
</feature>
<feature type="modified residue" description="Hydroxyproline" evidence="1">
    <location>
        <position position="301"/>
    </location>
</feature>
<feature type="modified residue" description="5-hydroxylysine" evidence="1">
    <location>
        <position position="310"/>
    </location>
</feature>
<feature type="glycosylation site" description="O-linked (Gal...) hydroxylysine" evidence="1">
    <location>
        <position position="178"/>
    </location>
</feature>
<feature type="glycosylation site" description="N-linked (GlcNAc...) asparagine" evidence="2">
    <location>
        <position position="202"/>
    </location>
</feature>
<feature type="glycosylation site" description="O-linked (Gal...) hydroxylysine" evidence="1">
    <location>
        <position position="310"/>
    </location>
</feature>
<feature type="glycosylation site" description="N-linked (GlcNAc...) asparagine" evidence="2">
    <location>
        <position position="381"/>
    </location>
</feature>
<feature type="sequence variant" id="VAR_042975" description="In dbSNP:rs3921595.">
    <original>E</original>
    <variation>A</variation>
    <location>
        <position position="470"/>
    </location>
</feature>
<protein>
    <recommendedName>
        <fullName evidence="5">Otolin-1</fullName>
    </recommendedName>
</protein>
<proteinExistence type="inferred from homology"/>
<name>OTOL1_HUMAN</name>
<dbReference type="EMBL" id="AC104471">
    <property type="status" value="NOT_ANNOTATED_CDS"/>
    <property type="molecule type" value="Genomic_DNA"/>
</dbReference>
<dbReference type="CCDS" id="CCDS46948.1"/>
<dbReference type="RefSeq" id="NP_001073909.1">
    <property type="nucleotide sequence ID" value="NM_001080440.1"/>
</dbReference>
<dbReference type="SMR" id="A6NHN0"/>
<dbReference type="BioGRID" id="126273">
    <property type="interactions" value="2"/>
</dbReference>
<dbReference type="FunCoup" id="A6NHN0">
    <property type="interactions" value="9"/>
</dbReference>
<dbReference type="IntAct" id="A6NHN0">
    <property type="interactions" value="1"/>
</dbReference>
<dbReference type="STRING" id="9606.ENSP00000330808"/>
<dbReference type="GlyCosmos" id="A6NHN0">
    <property type="glycosylation" value="4 sites, No reported glycans"/>
</dbReference>
<dbReference type="GlyGen" id="A6NHN0">
    <property type="glycosylation" value="4 sites"/>
</dbReference>
<dbReference type="iPTMnet" id="A6NHN0"/>
<dbReference type="PhosphoSitePlus" id="A6NHN0"/>
<dbReference type="BioMuta" id="OTOL1"/>
<dbReference type="jPOST" id="A6NHN0"/>
<dbReference type="MassIVE" id="A6NHN0"/>
<dbReference type="PaxDb" id="9606-ENSP00000330808"/>
<dbReference type="PeptideAtlas" id="A6NHN0"/>
<dbReference type="Antibodypedia" id="50531">
    <property type="antibodies" value="61 antibodies from 14 providers"/>
</dbReference>
<dbReference type="DNASU" id="131149"/>
<dbReference type="Ensembl" id="ENST00000327928.4">
    <property type="protein sequence ID" value="ENSP00000330808.4"/>
    <property type="gene ID" value="ENSG00000182447.4"/>
</dbReference>
<dbReference type="GeneID" id="131149"/>
<dbReference type="KEGG" id="hsa:131149"/>
<dbReference type="MANE-Select" id="ENST00000327928.4">
    <property type="protein sequence ID" value="ENSP00000330808.4"/>
    <property type="RefSeq nucleotide sequence ID" value="NM_001080440.1"/>
    <property type="RefSeq protein sequence ID" value="NP_001073909.1"/>
</dbReference>
<dbReference type="UCSC" id="uc011bpb.2">
    <property type="organism name" value="human"/>
</dbReference>
<dbReference type="AGR" id="HGNC:34071"/>
<dbReference type="CTD" id="131149"/>
<dbReference type="DisGeNET" id="131149"/>
<dbReference type="GeneCards" id="OTOL1"/>
<dbReference type="HGNC" id="HGNC:34071">
    <property type="gene designation" value="OTOL1"/>
</dbReference>
<dbReference type="HPA" id="ENSG00000182447">
    <property type="expression patterns" value="Not detected"/>
</dbReference>
<dbReference type="neXtProt" id="NX_A6NHN0"/>
<dbReference type="OpenTargets" id="ENSG00000182447"/>
<dbReference type="VEuPathDB" id="HostDB:ENSG00000182447"/>
<dbReference type="eggNOG" id="ENOG502QRPC">
    <property type="taxonomic scope" value="Eukaryota"/>
</dbReference>
<dbReference type="GeneTree" id="ENSGT00940000155435"/>
<dbReference type="HOGENOM" id="CLU_001074_0_0_1"/>
<dbReference type="InParanoid" id="A6NHN0"/>
<dbReference type="OMA" id="KGYCGES"/>
<dbReference type="OrthoDB" id="9948489at2759"/>
<dbReference type="PAN-GO" id="A6NHN0">
    <property type="GO annotations" value="6 GO annotations based on evolutionary models"/>
</dbReference>
<dbReference type="PhylomeDB" id="A6NHN0"/>
<dbReference type="TreeFam" id="TF334029"/>
<dbReference type="PathwayCommons" id="A6NHN0"/>
<dbReference type="SignaLink" id="A6NHN0"/>
<dbReference type="BioGRID-ORCS" id="131149">
    <property type="hits" value="12 hits in 1141 CRISPR screens"/>
</dbReference>
<dbReference type="GenomeRNAi" id="131149"/>
<dbReference type="Pharos" id="A6NHN0">
    <property type="development level" value="Tbio"/>
</dbReference>
<dbReference type="PRO" id="PR:A6NHN0"/>
<dbReference type="Proteomes" id="UP000005640">
    <property type="component" value="Chromosome 3"/>
</dbReference>
<dbReference type="RNAct" id="A6NHN0">
    <property type="molecule type" value="protein"/>
</dbReference>
<dbReference type="Bgee" id="ENSG00000182447">
    <property type="expression patterns" value="Expressed in prefrontal cortex and 4 other cell types or tissues"/>
</dbReference>
<dbReference type="GO" id="GO:0005581">
    <property type="term" value="C:collagen trimer"/>
    <property type="evidence" value="ECO:0007669"/>
    <property type="project" value="UniProtKB-KW"/>
</dbReference>
<dbReference type="GO" id="GO:0062023">
    <property type="term" value="C:collagen-containing extracellular matrix"/>
    <property type="evidence" value="ECO:0000318"/>
    <property type="project" value="GO_Central"/>
</dbReference>
<dbReference type="GO" id="GO:0005576">
    <property type="term" value="C:extracellular region"/>
    <property type="evidence" value="ECO:0000250"/>
    <property type="project" value="UniProtKB"/>
</dbReference>
<dbReference type="GO" id="GO:0005615">
    <property type="term" value="C:extracellular space"/>
    <property type="evidence" value="ECO:0000318"/>
    <property type="project" value="GO_Central"/>
</dbReference>
<dbReference type="GO" id="GO:0005509">
    <property type="term" value="F:calcium ion binding"/>
    <property type="evidence" value="ECO:0000250"/>
    <property type="project" value="UniProtKB"/>
</dbReference>
<dbReference type="GO" id="GO:0030020">
    <property type="term" value="F:extracellular matrix structural constituent conferring tensile strength"/>
    <property type="evidence" value="ECO:0000318"/>
    <property type="project" value="GO_Central"/>
</dbReference>
<dbReference type="GO" id="GO:0045299">
    <property type="term" value="P:otolith mineralization"/>
    <property type="evidence" value="ECO:0000250"/>
    <property type="project" value="UniProtKB"/>
</dbReference>
<dbReference type="GO" id="GO:0051260">
    <property type="term" value="P:protein homooligomerization"/>
    <property type="evidence" value="ECO:0000250"/>
    <property type="project" value="UniProtKB"/>
</dbReference>
<dbReference type="FunFam" id="2.60.120.40:FF:000001">
    <property type="entry name" value="Complement C1q B chain"/>
    <property type="match status" value="1"/>
</dbReference>
<dbReference type="Gene3D" id="2.60.120.40">
    <property type="match status" value="1"/>
</dbReference>
<dbReference type="InterPro" id="IPR001073">
    <property type="entry name" value="C1q_dom"/>
</dbReference>
<dbReference type="InterPro" id="IPR008160">
    <property type="entry name" value="Collagen"/>
</dbReference>
<dbReference type="InterPro" id="IPR050392">
    <property type="entry name" value="Collagen/C1q_domain"/>
</dbReference>
<dbReference type="InterPro" id="IPR008983">
    <property type="entry name" value="Tumour_necrosis_fac-like_dom"/>
</dbReference>
<dbReference type="PANTHER" id="PTHR15427:SF52">
    <property type="entry name" value="C1Q DOMAIN-CONTAINING PROTEIN"/>
    <property type="match status" value="1"/>
</dbReference>
<dbReference type="PANTHER" id="PTHR15427">
    <property type="entry name" value="EMILIN ELASTIN MICROFIBRIL INTERFACE-LOCATED PROTEIN ELASTIN MICROFIBRIL INTERFACER"/>
    <property type="match status" value="1"/>
</dbReference>
<dbReference type="Pfam" id="PF00386">
    <property type="entry name" value="C1q"/>
    <property type="match status" value="1"/>
</dbReference>
<dbReference type="Pfam" id="PF01391">
    <property type="entry name" value="Collagen"/>
    <property type="match status" value="3"/>
</dbReference>
<dbReference type="PRINTS" id="PR00007">
    <property type="entry name" value="COMPLEMNTC1Q"/>
</dbReference>
<dbReference type="SMART" id="SM00110">
    <property type="entry name" value="C1Q"/>
    <property type="match status" value="1"/>
</dbReference>
<dbReference type="SUPFAM" id="SSF49842">
    <property type="entry name" value="TNF-like"/>
    <property type="match status" value="1"/>
</dbReference>
<dbReference type="PROSITE" id="PS50871">
    <property type="entry name" value="C1Q"/>
    <property type="match status" value="1"/>
</dbReference>
<keyword id="KW-0106">Calcium</keyword>
<keyword id="KW-0176">Collagen</keyword>
<keyword id="KW-1015">Disulfide bond</keyword>
<keyword id="KW-0272">Extracellular matrix</keyword>
<keyword id="KW-0325">Glycoprotein</keyword>
<keyword id="KW-0379">Hydroxylation</keyword>
<keyword id="KW-0479">Metal-binding</keyword>
<keyword id="KW-1185">Reference proteome</keyword>
<keyword id="KW-0677">Repeat</keyword>
<keyword id="KW-0964">Secreted</keyword>
<keyword id="KW-0732">Signal</keyword>
<accession>A6NHN0</accession>